<keyword id="KW-0489">Methyltransferase</keyword>
<keyword id="KW-0949">S-adenosyl-L-methionine</keyword>
<keyword id="KW-0808">Transferase</keyword>
<keyword id="KW-0831">Ubiquinone biosynthesis</keyword>
<name>UBIG_SHESR</name>
<reference key="1">
    <citation type="submission" date="2006-08" db="EMBL/GenBank/DDBJ databases">
        <title>Complete sequence of chromosome 1 of Shewanella sp. MR-7.</title>
        <authorList>
            <person name="Copeland A."/>
            <person name="Lucas S."/>
            <person name="Lapidus A."/>
            <person name="Barry K."/>
            <person name="Detter J.C."/>
            <person name="Glavina del Rio T."/>
            <person name="Hammon N."/>
            <person name="Israni S."/>
            <person name="Dalin E."/>
            <person name="Tice H."/>
            <person name="Pitluck S."/>
            <person name="Kiss H."/>
            <person name="Brettin T."/>
            <person name="Bruce D."/>
            <person name="Han C."/>
            <person name="Tapia R."/>
            <person name="Gilna P."/>
            <person name="Schmutz J."/>
            <person name="Larimer F."/>
            <person name="Land M."/>
            <person name="Hauser L."/>
            <person name="Kyrpides N."/>
            <person name="Mikhailova N."/>
            <person name="Nealson K."/>
            <person name="Konstantinidis K."/>
            <person name="Klappenbach J."/>
            <person name="Tiedje J."/>
            <person name="Richardson P."/>
        </authorList>
    </citation>
    <scope>NUCLEOTIDE SEQUENCE [LARGE SCALE GENOMIC DNA]</scope>
    <source>
        <strain>MR-7</strain>
    </source>
</reference>
<accession>Q0HV07</accession>
<feature type="chain" id="PRO_1000013926" description="Ubiquinone biosynthesis O-methyltransferase">
    <location>
        <begin position="1"/>
        <end position="236"/>
    </location>
</feature>
<feature type="binding site" evidence="1">
    <location>
        <position position="39"/>
    </location>
    <ligand>
        <name>S-adenosyl-L-methionine</name>
        <dbReference type="ChEBI" id="CHEBI:59789"/>
    </ligand>
</feature>
<feature type="binding site" evidence="1">
    <location>
        <position position="59"/>
    </location>
    <ligand>
        <name>S-adenosyl-L-methionine</name>
        <dbReference type="ChEBI" id="CHEBI:59789"/>
    </ligand>
</feature>
<feature type="binding site" evidence="1">
    <location>
        <position position="80"/>
    </location>
    <ligand>
        <name>S-adenosyl-L-methionine</name>
        <dbReference type="ChEBI" id="CHEBI:59789"/>
    </ligand>
</feature>
<feature type="binding site" evidence="1">
    <location>
        <position position="124"/>
    </location>
    <ligand>
        <name>S-adenosyl-L-methionine</name>
        <dbReference type="ChEBI" id="CHEBI:59789"/>
    </ligand>
</feature>
<protein>
    <recommendedName>
        <fullName evidence="1">Ubiquinone biosynthesis O-methyltransferase</fullName>
    </recommendedName>
    <alternativeName>
        <fullName evidence="1">2-polyprenyl-6-hydroxyphenol methylase</fullName>
        <ecNumber evidence="1">2.1.1.222</ecNumber>
    </alternativeName>
    <alternativeName>
        <fullName evidence="1">3-demethylubiquinone 3-O-methyltransferase</fullName>
        <ecNumber evidence="1">2.1.1.64</ecNumber>
    </alternativeName>
</protein>
<sequence>MQQNTNVDPQEIAKFERMAETWWDLNGEFKPLHLLNPLRLNYIDQTAGGIFGKKVLDVGCGGGILSESMARIGAIVHGLDMGEEPLEVARLHALETGVSINYVKNTAEAHREDHREYYDVVTCMEMLEHVPDPLSVIQACCDMVKPGGFVFFSTINRNIKSFVETIIGAEYLLKMLPIGTHDHNKFIKPSELMALVDNTDLLCKDALGITYNPLTGIFKYTPKVDVNYMIATQKVD</sequence>
<comment type="function">
    <text evidence="1">O-methyltransferase that catalyzes the 2 O-methylation steps in the ubiquinone biosynthetic pathway.</text>
</comment>
<comment type="catalytic activity">
    <reaction evidence="1">
        <text>a 3-demethylubiquinol + S-adenosyl-L-methionine = a ubiquinol + S-adenosyl-L-homocysteine + H(+)</text>
        <dbReference type="Rhea" id="RHEA:44380"/>
        <dbReference type="Rhea" id="RHEA-COMP:9566"/>
        <dbReference type="Rhea" id="RHEA-COMP:10914"/>
        <dbReference type="ChEBI" id="CHEBI:15378"/>
        <dbReference type="ChEBI" id="CHEBI:17976"/>
        <dbReference type="ChEBI" id="CHEBI:57856"/>
        <dbReference type="ChEBI" id="CHEBI:59789"/>
        <dbReference type="ChEBI" id="CHEBI:84422"/>
        <dbReference type="EC" id="2.1.1.64"/>
    </reaction>
</comment>
<comment type="catalytic activity">
    <reaction evidence="1">
        <text>a 3-(all-trans-polyprenyl)benzene-1,2-diol + S-adenosyl-L-methionine = a 2-methoxy-6-(all-trans-polyprenyl)phenol + S-adenosyl-L-homocysteine + H(+)</text>
        <dbReference type="Rhea" id="RHEA:31411"/>
        <dbReference type="Rhea" id="RHEA-COMP:9550"/>
        <dbReference type="Rhea" id="RHEA-COMP:9551"/>
        <dbReference type="ChEBI" id="CHEBI:15378"/>
        <dbReference type="ChEBI" id="CHEBI:57856"/>
        <dbReference type="ChEBI" id="CHEBI:59789"/>
        <dbReference type="ChEBI" id="CHEBI:62729"/>
        <dbReference type="ChEBI" id="CHEBI:62731"/>
        <dbReference type="EC" id="2.1.1.222"/>
    </reaction>
</comment>
<comment type="pathway">
    <text evidence="1">Cofactor biosynthesis; ubiquinone biosynthesis.</text>
</comment>
<comment type="similarity">
    <text evidence="1">Belongs to the methyltransferase superfamily. UbiG/COQ3 family.</text>
</comment>
<organism>
    <name type="scientific">Shewanella sp. (strain MR-7)</name>
    <dbReference type="NCBI Taxonomy" id="60481"/>
    <lineage>
        <taxon>Bacteria</taxon>
        <taxon>Pseudomonadati</taxon>
        <taxon>Pseudomonadota</taxon>
        <taxon>Gammaproteobacteria</taxon>
        <taxon>Alteromonadales</taxon>
        <taxon>Shewanellaceae</taxon>
        <taxon>Shewanella</taxon>
    </lineage>
</organism>
<gene>
    <name evidence="1" type="primary">ubiG</name>
    <name type="ordered locus">Shewmr7_2060</name>
</gene>
<proteinExistence type="inferred from homology"/>
<dbReference type="EC" id="2.1.1.222" evidence="1"/>
<dbReference type="EC" id="2.1.1.64" evidence="1"/>
<dbReference type="EMBL" id="CP000444">
    <property type="protein sequence ID" value="ABI43048.1"/>
    <property type="molecule type" value="Genomic_DNA"/>
</dbReference>
<dbReference type="SMR" id="Q0HV07"/>
<dbReference type="KEGG" id="shm:Shewmr7_2060"/>
<dbReference type="HOGENOM" id="CLU_042432_5_0_6"/>
<dbReference type="UniPathway" id="UPA00232"/>
<dbReference type="GO" id="GO:0102208">
    <property type="term" value="F:2-polyprenyl-6-hydroxyphenol methylase activity"/>
    <property type="evidence" value="ECO:0007669"/>
    <property type="project" value="UniProtKB-EC"/>
</dbReference>
<dbReference type="GO" id="GO:0061542">
    <property type="term" value="F:3-demethylubiquinol 3-O-methyltransferase activity"/>
    <property type="evidence" value="ECO:0007669"/>
    <property type="project" value="UniProtKB-UniRule"/>
</dbReference>
<dbReference type="GO" id="GO:0010420">
    <property type="term" value="F:polyprenyldihydroxybenzoate methyltransferase activity"/>
    <property type="evidence" value="ECO:0007669"/>
    <property type="project" value="InterPro"/>
</dbReference>
<dbReference type="GO" id="GO:0032259">
    <property type="term" value="P:methylation"/>
    <property type="evidence" value="ECO:0007669"/>
    <property type="project" value="UniProtKB-KW"/>
</dbReference>
<dbReference type="CDD" id="cd02440">
    <property type="entry name" value="AdoMet_MTases"/>
    <property type="match status" value="1"/>
</dbReference>
<dbReference type="FunFam" id="3.40.50.150:FF:000028">
    <property type="entry name" value="Ubiquinone biosynthesis O-methyltransferase"/>
    <property type="match status" value="1"/>
</dbReference>
<dbReference type="Gene3D" id="3.40.50.150">
    <property type="entry name" value="Vaccinia Virus protein VP39"/>
    <property type="match status" value="1"/>
</dbReference>
<dbReference type="HAMAP" id="MF_00472">
    <property type="entry name" value="UbiG"/>
    <property type="match status" value="1"/>
</dbReference>
<dbReference type="InterPro" id="IPR029063">
    <property type="entry name" value="SAM-dependent_MTases_sf"/>
</dbReference>
<dbReference type="InterPro" id="IPR010233">
    <property type="entry name" value="UbiG_MeTrfase"/>
</dbReference>
<dbReference type="NCBIfam" id="TIGR01983">
    <property type="entry name" value="UbiG"/>
    <property type="match status" value="1"/>
</dbReference>
<dbReference type="PANTHER" id="PTHR43464">
    <property type="entry name" value="METHYLTRANSFERASE"/>
    <property type="match status" value="1"/>
</dbReference>
<dbReference type="PANTHER" id="PTHR43464:SF19">
    <property type="entry name" value="UBIQUINONE BIOSYNTHESIS O-METHYLTRANSFERASE, MITOCHONDRIAL"/>
    <property type="match status" value="1"/>
</dbReference>
<dbReference type="Pfam" id="PF13489">
    <property type="entry name" value="Methyltransf_23"/>
    <property type="match status" value="1"/>
</dbReference>
<dbReference type="SUPFAM" id="SSF53335">
    <property type="entry name" value="S-adenosyl-L-methionine-dependent methyltransferases"/>
    <property type="match status" value="1"/>
</dbReference>
<evidence type="ECO:0000255" key="1">
    <source>
        <dbReference type="HAMAP-Rule" id="MF_00472"/>
    </source>
</evidence>